<name>GATA5_ARATH</name>
<sequence length="339" mass="37091">MEQAALKSSVRKEMALKTTSPVYEEFLAVTTAQNGFSVDDFSVDDLLDLSNDDVFADEETDLKAQHEMVRVSSEEPNDDGDALRRSSDFSGCDDFGSLPTSELSLPADDLANLEWLSHFVEDSFTEYSGPNLTGTPTEKPAWLTGDRKHPVTAVTEETCFKSPVPAKARSKRNRNGLKVWSLGSSSSSGPSSSGSTSSSSSGPSSPWFSGAELLEPVVTSERPPFPKKHKKRSAESVFSGELQQLQPQRKCSHCGVQKTPQWRAGPMGAKTLCNACGVRYKSGRLLPEYRPACSPTFSSELHSNHHRKVIEMRRKKEPTSDNETGLNQLVQSPQAVPSF</sequence>
<feature type="chain" id="PRO_0000083443" description="GATA transcription factor 5">
    <location>
        <begin position="1"/>
        <end position="339"/>
    </location>
</feature>
<feature type="zinc finger region" description="GATA-type" evidence="3">
    <location>
        <begin position="245"/>
        <end position="299"/>
    </location>
</feature>
<feature type="region of interest" description="Disordered" evidence="4">
    <location>
        <begin position="68"/>
        <end position="88"/>
    </location>
</feature>
<feature type="region of interest" description="Disordered" evidence="4">
    <location>
        <begin position="126"/>
        <end position="145"/>
    </location>
</feature>
<feature type="region of interest" description="Disordered" evidence="4">
    <location>
        <begin position="163"/>
        <end position="206"/>
    </location>
</feature>
<feature type="region of interest" description="Disordered" evidence="4">
    <location>
        <begin position="221"/>
        <end position="242"/>
    </location>
</feature>
<feature type="region of interest" description="Disordered" evidence="4">
    <location>
        <begin position="314"/>
        <end position="339"/>
    </location>
</feature>
<feature type="short sequence motif" description="Nuclear localization signal" evidence="2">
    <location>
        <begin position="167"/>
        <end position="174"/>
    </location>
</feature>
<feature type="compositionally biased region" description="Polar residues" evidence="4">
    <location>
        <begin position="126"/>
        <end position="136"/>
    </location>
</feature>
<feature type="compositionally biased region" description="Low complexity" evidence="4">
    <location>
        <begin position="181"/>
        <end position="206"/>
    </location>
</feature>
<feature type="compositionally biased region" description="Polar residues" evidence="4">
    <location>
        <begin position="321"/>
        <end position="339"/>
    </location>
</feature>
<accession>Q9FH57</accession>
<gene>
    <name type="primary">GATA5</name>
    <name type="ordered locus">At5g66320</name>
    <name type="ORF">K1L20.10</name>
</gene>
<proteinExistence type="evidence at transcript level"/>
<organism>
    <name type="scientific">Arabidopsis thaliana</name>
    <name type="common">Mouse-ear cress</name>
    <dbReference type="NCBI Taxonomy" id="3702"/>
    <lineage>
        <taxon>Eukaryota</taxon>
        <taxon>Viridiplantae</taxon>
        <taxon>Streptophyta</taxon>
        <taxon>Embryophyta</taxon>
        <taxon>Tracheophyta</taxon>
        <taxon>Spermatophyta</taxon>
        <taxon>Magnoliopsida</taxon>
        <taxon>eudicotyledons</taxon>
        <taxon>Gunneridae</taxon>
        <taxon>Pentapetalae</taxon>
        <taxon>rosids</taxon>
        <taxon>malvids</taxon>
        <taxon>Brassicales</taxon>
        <taxon>Brassicaceae</taxon>
        <taxon>Camelineae</taxon>
        <taxon>Arabidopsis</taxon>
    </lineage>
</organism>
<reference key="1">
    <citation type="journal article" date="2000" name="DNA Res.">
        <title>Structural analysis of Arabidopsis thaliana chromosome 5. X. Sequence features of the regions of 3,076,755 bp covered by sixty P1 and TAC clones.</title>
        <authorList>
            <person name="Sato S."/>
            <person name="Nakamura Y."/>
            <person name="Kaneko T."/>
            <person name="Katoh T."/>
            <person name="Asamizu E."/>
            <person name="Kotani H."/>
            <person name="Tabata S."/>
        </authorList>
    </citation>
    <scope>NUCLEOTIDE SEQUENCE [LARGE SCALE GENOMIC DNA]</scope>
    <source>
        <strain>cv. Columbia</strain>
    </source>
</reference>
<reference key="2">
    <citation type="journal article" date="2017" name="Plant J.">
        <title>Araport11: a complete reannotation of the Arabidopsis thaliana reference genome.</title>
        <authorList>
            <person name="Cheng C.Y."/>
            <person name="Krishnakumar V."/>
            <person name="Chan A.P."/>
            <person name="Thibaud-Nissen F."/>
            <person name="Schobel S."/>
            <person name="Town C.D."/>
        </authorList>
    </citation>
    <scope>GENOME REANNOTATION</scope>
    <source>
        <strain>cv. Columbia</strain>
    </source>
</reference>
<reference key="3">
    <citation type="journal article" date="2003" name="Science">
        <title>Empirical analysis of transcriptional activity in the Arabidopsis genome.</title>
        <authorList>
            <person name="Yamada K."/>
            <person name="Lim J."/>
            <person name="Dale J.M."/>
            <person name="Chen H."/>
            <person name="Shinn P."/>
            <person name="Palm C.J."/>
            <person name="Southwick A.M."/>
            <person name="Wu H.C."/>
            <person name="Kim C.J."/>
            <person name="Nguyen M."/>
            <person name="Pham P.K."/>
            <person name="Cheuk R.F."/>
            <person name="Karlin-Newmann G."/>
            <person name="Liu S.X."/>
            <person name="Lam B."/>
            <person name="Sakano H."/>
            <person name="Wu T."/>
            <person name="Yu G."/>
            <person name="Miranda M."/>
            <person name="Quach H.L."/>
            <person name="Tripp M."/>
            <person name="Chang C.H."/>
            <person name="Lee J.M."/>
            <person name="Toriumi M.J."/>
            <person name="Chan M.M."/>
            <person name="Tang C.C."/>
            <person name="Onodera C.S."/>
            <person name="Deng J.M."/>
            <person name="Akiyama K."/>
            <person name="Ansari Y."/>
            <person name="Arakawa T."/>
            <person name="Banh J."/>
            <person name="Banno F."/>
            <person name="Bowser L."/>
            <person name="Brooks S.Y."/>
            <person name="Carninci P."/>
            <person name="Chao Q."/>
            <person name="Choy N."/>
            <person name="Enju A."/>
            <person name="Goldsmith A.D."/>
            <person name="Gurjal M."/>
            <person name="Hansen N.F."/>
            <person name="Hayashizaki Y."/>
            <person name="Johnson-Hopson C."/>
            <person name="Hsuan V.W."/>
            <person name="Iida K."/>
            <person name="Karnes M."/>
            <person name="Khan S."/>
            <person name="Koesema E."/>
            <person name="Ishida J."/>
            <person name="Jiang P.X."/>
            <person name="Jones T."/>
            <person name="Kawai J."/>
            <person name="Kamiya A."/>
            <person name="Meyers C."/>
            <person name="Nakajima M."/>
            <person name="Narusaka M."/>
            <person name="Seki M."/>
            <person name="Sakurai T."/>
            <person name="Satou M."/>
            <person name="Tamse R."/>
            <person name="Vaysberg M."/>
            <person name="Wallender E.K."/>
            <person name="Wong C."/>
            <person name="Yamamura Y."/>
            <person name="Yuan S."/>
            <person name="Shinozaki K."/>
            <person name="Davis R.W."/>
            <person name="Theologis A."/>
            <person name="Ecker J.R."/>
        </authorList>
    </citation>
    <scope>NUCLEOTIDE SEQUENCE [LARGE SCALE MRNA]</scope>
    <source>
        <strain>cv. Columbia</strain>
    </source>
</reference>
<reference key="4">
    <citation type="journal article" date="2004" name="Plant Physiol.">
        <title>The GATA family of transcription factors in Arabidopsis and rice.</title>
        <authorList>
            <person name="Reyes J.C."/>
            <person name="Muro-Pastor M.I."/>
            <person name="Florencio F.J."/>
        </authorList>
    </citation>
    <scope>GENE FAMILY ORGANIZATION</scope>
</reference>
<comment type="function">
    <text evidence="1">Transcriptional activator that specifically binds 5'-GATA-3' or 5'-GAT-3' motifs within gene promoters. May be involved in the regulation of some light-responsive genes (By similarity).</text>
</comment>
<comment type="subcellular location">
    <subcellularLocation>
        <location evidence="5">Nucleus</location>
    </subcellularLocation>
</comment>
<comment type="similarity">
    <text evidence="5">Belongs to the type IV zinc-finger family. Class A subfamily.</text>
</comment>
<keyword id="KW-0010">Activator</keyword>
<keyword id="KW-0238">DNA-binding</keyword>
<keyword id="KW-0479">Metal-binding</keyword>
<keyword id="KW-0539">Nucleus</keyword>
<keyword id="KW-1185">Reference proteome</keyword>
<keyword id="KW-0804">Transcription</keyword>
<keyword id="KW-0805">Transcription regulation</keyword>
<keyword id="KW-0862">Zinc</keyword>
<keyword id="KW-0863">Zinc-finger</keyword>
<dbReference type="EMBL" id="AB022211">
    <property type="protein sequence ID" value="BAB10711.1"/>
    <property type="molecule type" value="Genomic_DNA"/>
</dbReference>
<dbReference type="EMBL" id="CP002688">
    <property type="protein sequence ID" value="AED98198.1"/>
    <property type="molecule type" value="Genomic_DNA"/>
</dbReference>
<dbReference type="EMBL" id="CP002688">
    <property type="protein sequence ID" value="AED98199.1"/>
    <property type="molecule type" value="Genomic_DNA"/>
</dbReference>
<dbReference type="EMBL" id="AY136450">
    <property type="protein sequence ID" value="AAM97115.1"/>
    <property type="molecule type" value="mRNA"/>
</dbReference>
<dbReference type="EMBL" id="BT010367">
    <property type="protein sequence ID" value="AAQ56810.1"/>
    <property type="molecule type" value="mRNA"/>
</dbReference>
<dbReference type="RefSeq" id="NP_201433.1">
    <property type="nucleotide sequence ID" value="NM_126030.6"/>
</dbReference>
<dbReference type="RefSeq" id="NP_975002.1">
    <property type="nucleotide sequence ID" value="NM_203273.2"/>
</dbReference>
<dbReference type="SMR" id="Q9FH57"/>
<dbReference type="BioGRID" id="22006">
    <property type="interactions" value="2"/>
</dbReference>
<dbReference type="FunCoup" id="Q9FH57">
    <property type="interactions" value="61"/>
</dbReference>
<dbReference type="STRING" id="3702.Q9FH57"/>
<dbReference type="PaxDb" id="3702-AT5G66320.2"/>
<dbReference type="ProteomicsDB" id="228965"/>
<dbReference type="EnsemblPlants" id="AT5G66320.1">
    <property type="protein sequence ID" value="AT5G66320.1"/>
    <property type="gene ID" value="AT5G66320"/>
</dbReference>
<dbReference type="EnsemblPlants" id="AT5G66320.2">
    <property type="protein sequence ID" value="AT5G66320.2"/>
    <property type="gene ID" value="AT5G66320"/>
</dbReference>
<dbReference type="GeneID" id="836764"/>
<dbReference type="Gramene" id="AT5G66320.1">
    <property type="protein sequence ID" value="AT5G66320.1"/>
    <property type="gene ID" value="AT5G66320"/>
</dbReference>
<dbReference type="Gramene" id="AT5G66320.2">
    <property type="protein sequence ID" value="AT5G66320.2"/>
    <property type="gene ID" value="AT5G66320"/>
</dbReference>
<dbReference type="KEGG" id="ath:AT5G66320"/>
<dbReference type="Araport" id="AT5G66320"/>
<dbReference type="TAIR" id="AT5G66320">
    <property type="gene designation" value="GATA5"/>
</dbReference>
<dbReference type="eggNOG" id="KOG1601">
    <property type="taxonomic scope" value="Eukaryota"/>
</dbReference>
<dbReference type="HOGENOM" id="CLU_045755_1_1_1"/>
<dbReference type="InParanoid" id="Q9FH57"/>
<dbReference type="OMA" id="YKKSHSK"/>
<dbReference type="PhylomeDB" id="Q9FH57"/>
<dbReference type="PRO" id="PR:Q9FH57"/>
<dbReference type="Proteomes" id="UP000006548">
    <property type="component" value="Chromosome 5"/>
</dbReference>
<dbReference type="ExpressionAtlas" id="Q9FH57">
    <property type="expression patterns" value="baseline and differential"/>
</dbReference>
<dbReference type="GO" id="GO:0005634">
    <property type="term" value="C:nucleus"/>
    <property type="evidence" value="ECO:0007669"/>
    <property type="project" value="UniProtKB-SubCell"/>
</dbReference>
<dbReference type="GO" id="GO:0003700">
    <property type="term" value="F:DNA-binding transcription factor activity"/>
    <property type="evidence" value="ECO:0000250"/>
    <property type="project" value="TAIR"/>
</dbReference>
<dbReference type="GO" id="GO:0000976">
    <property type="term" value="F:transcription cis-regulatory region binding"/>
    <property type="evidence" value="ECO:0000353"/>
    <property type="project" value="TAIR"/>
</dbReference>
<dbReference type="GO" id="GO:0008270">
    <property type="term" value="F:zinc ion binding"/>
    <property type="evidence" value="ECO:0007669"/>
    <property type="project" value="UniProtKB-KW"/>
</dbReference>
<dbReference type="GO" id="GO:0045893">
    <property type="term" value="P:positive regulation of DNA-templated transcription"/>
    <property type="evidence" value="ECO:0007669"/>
    <property type="project" value="InterPro"/>
</dbReference>
<dbReference type="CDD" id="cd00202">
    <property type="entry name" value="ZnF_GATA"/>
    <property type="match status" value="1"/>
</dbReference>
<dbReference type="FunFam" id="3.30.50.10:FF:000018">
    <property type="entry name" value="GATA transcription factor"/>
    <property type="match status" value="1"/>
</dbReference>
<dbReference type="Gene3D" id="3.30.50.10">
    <property type="entry name" value="Erythroid Transcription Factor GATA-1, subunit A"/>
    <property type="match status" value="1"/>
</dbReference>
<dbReference type="InterPro" id="IPR051140">
    <property type="entry name" value="GATA_TF"/>
</dbReference>
<dbReference type="InterPro" id="IPR016679">
    <property type="entry name" value="TF_GATA_pln"/>
</dbReference>
<dbReference type="InterPro" id="IPR000679">
    <property type="entry name" value="Znf_GATA"/>
</dbReference>
<dbReference type="InterPro" id="IPR013088">
    <property type="entry name" value="Znf_NHR/GATA"/>
</dbReference>
<dbReference type="PANTHER" id="PTHR45658">
    <property type="entry name" value="GATA TRANSCRIPTION FACTOR"/>
    <property type="match status" value="1"/>
</dbReference>
<dbReference type="PANTHER" id="PTHR45658:SF92">
    <property type="entry name" value="GATA TRANSCRIPTION FACTOR 5"/>
    <property type="match status" value="1"/>
</dbReference>
<dbReference type="Pfam" id="PF00320">
    <property type="entry name" value="GATA"/>
    <property type="match status" value="1"/>
</dbReference>
<dbReference type="PIRSF" id="PIRSF016992">
    <property type="entry name" value="TF_GATA_plant"/>
    <property type="match status" value="1"/>
</dbReference>
<dbReference type="SMART" id="SM00401">
    <property type="entry name" value="ZnF_GATA"/>
    <property type="match status" value="1"/>
</dbReference>
<dbReference type="SUPFAM" id="SSF57716">
    <property type="entry name" value="Glucocorticoid receptor-like (DNA-binding domain)"/>
    <property type="match status" value="1"/>
</dbReference>
<dbReference type="PROSITE" id="PS00344">
    <property type="entry name" value="GATA_ZN_FINGER_1"/>
    <property type="match status" value="1"/>
</dbReference>
<dbReference type="PROSITE" id="PS50114">
    <property type="entry name" value="GATA_ZN_FINGER_2"/>
    <property type="match status" value="1"/>
</dbReference>
<evidence type="ECO:0000250" key="1"/>
<evidence type="ECO:0000255" key="2"/>
<evidence type="ECO:0000255" key="3">
    <source>
        <dbReference type="PROSITE-ProRule" id="PRU00094"/>
    </source>
</evidence>
<evidence type="ECO:0000256" key="4">
    <source>
        <dbReference type="SAM" id="MobiDB-lite"/>
    </source>
</evidence>
<evidence type="ECO:0000305" key="5"/>
<protein>
    <recommendedName>
        <fullName>GATA transcription factor 5</fullName>
    </recommendedName>
</protein>